<feature type="chain" id="PRO_0000102084" description="Antiviral helicase SKI2">
    <location>
        <begin position="1"/>
        <end position="1287"/>
    </location>
</feature>
<feature type="domain" description="Helicase ATP-binding" evidence="2">
    <location>
        <begin position="338"/>
        <end position="496"/>
    </location>
</feature>
<feature type="domain" description="Helicase C-terminal" evidence="3">
    <location>
        <begin position="638"/>
        <end position="815"/>
    </location>
</feature>
<feature type="region of interest" description="Disordered" evidence="4">
    <location>
        <begin position="540"/>
        <end position="608"/>
    </location>
</feature>
<feature type="region of interest" description="RNA-binding RGG-box" evidence="1">
    <location>
        <begin position="556"/>
        <end position="577"/>
    </location>
</feature>
<feature type="short sequence motif" description="DEVH box">
    <location>
        <begin position="444"/>
        <end position="447"/>
    </location>
</feature>
<feature type="compositionally biased region" description="Gly residues" evidence="4">
    <location>
        <begin position="555"/>
        <end position="567"/>
    </location>
</feature>
<feature type="compositionally biased region" description="Gly residues" evidence="4">
    <location>
        <begin position="585"/>
        <end position="595"/>
    </location>
</feature>
<feature type="binding site" evidence="2">
    <location>
        <begin position="351"/>
        <end position="358"/>
    </location>
    <ligand>
        <name>ATP</name>
        <dbReference type="ChEBI" id="CHEBI:30616"/>
    </ligand>
</feature>
<feature type="modified residue" description="Phosphoserine" evidence="21 22 23">
    <location>
        <position position="209"/>
    </location>
</feature>
<feature type="sequence conflict" description="In Ref. 1; AAA35049." evidence="20" ref="1">
    <original>W</original>
    <variation>C</variation>
    <location>
        <position position="326"/>
    </location>
</feature>
<feature type="sequence conflict" description="In Ref. 1; AAA35049." evidence="20" ref="1">
    <original>QM</original>
    <variation>L</variation>
    <location>
        <begin position="759"/>
        <end position="760"/>
    </location>
</feature>
<feature type="helix" evidence="27">
    <location>
        <begin position="10"/>
        <end position="17"/>
    </location>
</feature>
<feature type="helix" evidence="27">
    <location>
        <begin position="46"/>
        <end position="55"/>
    </location>
</feature>
<feature type="helix" evidence="27">
    <location>
        <begin position="64"/>
        <end position="70"/>
    </location>
</feature>
<feature type="helix" evidence="27">
    <location>
        <begin position="88"/>
        <end position="91"/>
    </location>
</feature>
<feature type="strand" evidence="26">
    <location>
        <begin position="102"/>
        <end position="108"/>
    </location>
</feature>
<feature type="turn" evidence="26">
    <location>
        <begin position="109"/>
        <end position="112"/>
    </location>
</feature>
<feature type="strand" evidence="26">
    <location>
        <begin position="113"/>
        <end position="120"/>
    </location>
</feature>
<feature type="turn" evidence="26">
    <location>
        <begin position="131"/>
        <end position="133"/>
    </location>
</feature>
<feature type="strand" evidence="26">
    <location>
        <begin position="143"/>
        <end position="145"/>
    </location>
</feature>
<feature type="strand" evidence="26">
    <location>
        <begin position="147"/>
        <end position="149"/>
    </location>
</feature>
<feature type="strand" evidence="27">
    <location>
        <begin position="190"/>
        <end position="193"/>
    </location>
</feature>
<feature type="strand" evidence="25">
    <location>
        <begin position="302"/>
        <end position="305"/>
    </location>
</feature>
<feature type="helix" evidence="25">
    <location>
        <begin position="315"/>
        <end position="318"/>
    </location>
</feature>
<feature type="helix" evidence="25">
    <location>
        <begin position="332"/>
        <end position="342"/>
    </location>
</feature>
<feature type="strand" evidence="25">
    <location>
        <begin position="346"/>
        <end position="350"/>
    </location>
</feature>
<feature type="helix" evidence="25">
    <location>
        <begin position="358"/>
        <end position="370"/>
    </location>
</feature>
<feature type="strand" evidence="25">
    <location>
        <begin position="374"/>
        <end position="380"/>
    </location>
</feature>
<feature type="helix" evidence="25">
    <location>
        <begin position="382"/>
        <end position="384"/>
    </location>
</feature>
<feature type="helix" evidence="25">
    <location>
        <begin position="385"/>
        <end position="393"/>
    </location>
</feature>
<feature type="strand" evidence="25">
    <location>
        <begin position="401"/>
        <end position="404"/>
    </location>
</feature>
<feature type="strand" evidence="25">
    <location>
        <begin position="414"/>
        <end position="420"/>
    </location>
</feature>
<feature type="helix" evidence="25">
    <location>
        <begin position="421"/>
        <end position="430"/>
    </location>
</feature>
<feature type="helix" evidence="25">
    <location>
        <begin position="434"/>
        <end position="437"/>
    </location>
</feature>
<feature type="strand" evidence="25">
    <location>
        <begin position="438"/>
        <end position="443"/>
    </location>
</feature>
<feature type="helix" evidence="25">
    <location>
        <begin position="458"/>
        <end position="464"/>
    </location>
</feature>
<feature type="strand" evidence="25">
    <location>
        <begin position="470"/>
        <end position="475"/>
    </location>
</feature>
<feature type="helix" evidence="25">
    <location>
        <begin position="481"/>
        <end position="492"/>
    </location>
</feature>
<feature type="strand" evidence="25">
    <location>
        <begin position="496"/>
        <end position="500"/>
    </location>
</feature>
<feature type="strand" evidence="25">
    <location>
        <begin position="508"/>
        <end position="514"/>
    </location>
</feature>
<feature type="strand" evidence="25">
    <location>
        <begin position="517"/>
        <end position="522"/>
    </location>
</feature>
<feature type="helix" evidence="25">
    <location>
        <begin position="530"/>
        <end position="540"/>
    </location>
</feature>
<feature type="helix" evidence="25">
    <location>
        <begin position="613"/>
        <end position="623"/>
    </location>
</feature>
<feature type="strand" evidence="25">
    <location>
        <begin position="628"/>
        <end position="632"/>
    </location>
</feature>
<feature type="helix" evidence="25">
    <location>
        <begin position="636"/>
        <end position="644"/>
    </location>
</feature>
<feature type="turn" evidence="25">
    <location>
        <begin position="645"/>
        <end position="648"/>
    </location>
</feature>
<feature type="helix" evidence="25">
    <location>
        <begin position="654"/>
        <end position="668"/>
    </location>
</feature>
<feature type="helix" evidence="25">
    <location>
        <begin position="673"/>
        <end position="676"/>
    </location>
</feature>
<feature type="helix" evidence="25">
    <location>
        <begin position="679"/>
        <end position="688"/>
    </location>
</feature>
<feature type="turn" evidence="25">
    <location>
        <begin position="689"/>
        <end position="691"/>
    </location>
</feature>
<feature type="strand" evidence="25">
    <location>
        <begin position="692"/>
        <end position="695"/>
    </location>
</feature>
<feature type="helix" evidence="25">
    <location>
        <begin position="701"/>
        <end position="712"/>
    </location>
</feature>
<feature type="strand" evidence="25">
    <location>
        <begin position="717"/>
        <end position="721"/>
    </location>
</feature>
<feature type="helix" evidence="25">
    <location>
        <begin position="724"/>
        <end position="727"/>
    </location>
</feature>
<feature type="strand" evidence="25">
    <location>
        <begin position="734"/>
        <end position="739"/>
    </location>
</feature>
<feature type="strand" evidence="25">
    <location>
        <begin position="741"/>
        <end position="745"/>
    </location>
</feature>
<feature type="strand" evidence="25">
    <location>
        <begin position="748"/>
        <end position="751"/>
    </location>
</feature>
<feature type="helix" evidence="25">
    <location>
        <begin position="754"/>
        <end position="761"/>
    </location>
</feature>
<feature type="helix" evidence="25">
    <location>
        <begin position="762"/>
        <end position="764"/>
    </location>
</feature>
<feature type="turn" evidence="25">
    <location>
        <begin position="767"/>
        <end position="769"/>
    </location>
</feature>
<feature type="strand" evidence="25">
    <location>
        <begin position="771"/>
        <end position="778"/>
    </location>
</feature>
<feature type="helix" evidence="25">
    <location>
        <begin position="786"/>
        <end position="794"/>
    </location>
</feature>
<feature type="helix" evidence="25">
    <location>
        <begin position="808"/>
        <end position="817"/>
    </location>
</feature>
<feature type="helix" evidence="25">
    <location>
        <begin position="821"/>
        <end position="827"/>
    </location>
</feature>
<feature type="helix" evidence="25">
    <location>
        <begin position="830"/>
        <end position="854"/>
    </location>
</feature>
<feature type="turn" evidence="24">
    <location>
        <begin position="862"/>
        <end position="864"/>
    </location>
</feature>
<feature type="strand" evidence="24">
    <location>
        <begin position="865"/>
        <end position="868"/>
    </location>
</feature>
<feature type="helix" evidence="25">
    <location>
        <begin position="871"/>
        <end position="889"/>
    </location>
</feature>
<feature type="helix" evidence="25">
    <location>
        <begin position="895"/>
        <end position="898"/>
    </location>
</feature>
<feature type="strand" evidence="25">
    <location>
        <begin position="903"/>
        <end position="908"/>
    </location>
</feature>
<feature type="strand" evidence="25">
    <location>
        <begin position="914"/>
        <end position="923"/>
    </location>
</feature>
<feature type="turn" evidence="25">
    <location>
        <begin position="924"/>
        <end position="927"/>
    </location>
</feature>
<feature type="strand" evidence="25">
    <location>
        <begin position="928"/>
        <end position="933"/>
    </location>
</feature>
<feature type="strand" evidence="24">
    <location>
        <begin position="943"/>
        <end position="945"/>
    </location>
</feature>
<feature type="helix" evidence="25">
    <location>
        <begin position="955"/>
        <end position="961"/>
    </location>
</feature>
<feature type="strand" evidence="25">
    <location>
        <begin position="971"/>
        <end position="976"/>
    </location>
</feature>
<feature type="helix" evidence="24">
    <location>
        <begin position="977"/>
        <end position="979"/>
    </location>
</feature>
<feature type="strand" evidence="25">
    <location>
        <begin position="982"/>
        <end position="987"/>
    </location>
</feature>
<feature type="helix" evidence="25">
    <location>
        <begin position="992"/>
        <end position="997"/>
    </location>
</feature>
<feature type="helix" evidence="25">
    <location>
        <begin position="1000"/>
        <end position="1015"/>
    </location>
</feature>
<feature type="helix" evidence="25">
    <location>
        <begin position="1031"/>
        <end position="1044"/>
    </location>
</feature>
<feature type="helix" evidence="24">
    <location>
        <begin position="1051"/>
        <end position="1053"/>
    </location>
</feature>
<feature type="helix" evidence="25">
    <location>
        <begin position="1061"/>
        <end position="1079"/>
    </location>
</feature>
<feature type="turn" evidence="25">
    <location>
        <begin position="1080"/>
        <end position="1082"/>
    </location>
</feature>
<feature type="helix" evidence="25">
    <location>
        <begin position="1088"/>
        <end position="1101"/>
    </location>
</feature>
<feature type="helix" evidence="25">
    <location>
        <begin position="1113"/>
        <end position="1118"/>
    </location>
</feature>
<feature type="helix" evidence="25">
    <location>
        <begin position="1126"/>
        <end position="1134"/>
    </location>
</feature>
<feature type="helix" evidence="25">
    <location>
        <begin position="1137"/>
        <end position="1140"/>
    </location>
</feature>
<feature type="helix" evidence="25">
    <location>
        <begin position="1143"/>
        <end position="1150"/>
    </location>
</feature>
<feature type="helix" evidence="25">
    <location>
        <begin position="1151"/>
        <end position="1153"/>
    </location>
</feature>
<feature type="helix" evidence="25">
    <location>
        <begin position="1169"/>
        <end position="1191"/>
    </location>
</feature>
<feature type="helix" evidence="25">
    <location>
        <begin position="1198"/>
        <end position="1202"/>
    </location>
</feature>
<feature type="helix" evidence="25">
    <location>
        <begin position="1203"/>
        <end position="1205"/>
    </location>
</feature>
<feature type="turn" evidence="25">
    <location>
        <begin position="1208"/>
        <end position="1211"/>
    </location>
</feature>
<feature type="helix" evidence="25">
    <location>
        <begin position="1212"/>
        <end position="1220"/>
    </location>
</feature>
<feature type="helix" evidence="25">
    <location>
        <begin position="1224"/>
        <end position="1229"/>
    </location>
</feature>
<feature type="helix" evidence="25">
    <location>
        <begin position="1235"/>
        <end position="1259"/>
    </location>
</feature>
<feature type="helix" evidence="25">
    <location>
        <begin position="1262"/>
        <end position="1275"/>
    </location>
</feature>
<feature type="helix" evidence="25">
    <location>
        <begin position="1278"/>
        <end position="1281"/>
    </location>
</feature>
<name>SKI2_YEAST</name>
<organism>
    <name type="scientific">Saccharomyces cerevisiae (strain ATCC 204508 / S288c)</name>
    <name type="common">Baker's yeast</name>
    <dbReference type="NCBI Taxonomy" id="559292"/>
    <lineage>
        <taxon>Eukaryota</taxon>
        <taxon>Fungi</taxon>
        <taxon>Dikarya</taxon>
        <taxon>Ascomycota</taxon>
        <taxon>Saccharomycotina</taxon>
        <taxon>Saccharomycetes</taxon>
        <taxon>Saccharomycetales</taxon>
        <taxon>Saccharomycetaceae</taxon>
        <taxon>Saccharomyces</taxon>
    </lineage>
</organism>
<reference key="1">
    <citation type="journal article" date="1993" name="Mol. Cell. Biol.">
        <title>Evidence that the SKI antiviral system of Saccharomyces cerevisiae acts by blocking expression of viral mRNA.</title>
        <authorList>
            <person name="Widner W.R."/>
            <person name="Wickner R.B."/>
        </authorList>
    </citation>
    <scope>NUCLEOTIDE SEQUENCE [MRNA]</scope>
    <scope>FUNCTION</scope>
</reference>
<reference key="2">
    <citation type="journal article" date="1997" name="Nature">
        <title>The nucleotide sequence of Saccharomyces cerevisiae chromosome XII.</title>
        <authorList>
            <person name="Johnston M."/>
            <person name="Hillier L.W."/>
            <person name="Riles L."/>
            <person name="Albermann K."/>
            <person name="Andre B."/>
            <person name="Ansorge W."/>
            <person name="Benes V."/>
            <person name="Brueckner M."/>
            <person name="Delius H."/>
            <person name="Dubois E."/>
            <person name="Duesterhoeft A."/>
            <person name="Entian K.-D."/>
            <person name="Floeth M."/>
            <person name="Goffeau A."/>
            <person name="Hebling U."/>
            <person name="Heumann K."/>
            <person name="Heuss-Neitzel D."/>
            <person name="Hilbert H."/>
            <person name="Hilger F."/>
            <person name="Kleine K."/>
            <person name="Koetter P."/>
            <person name="Louis E.J."/>
            <person name="Messenguy F."/>
            <person name="Mewes H.-W."/>
            <person name="Miosga T."/>
            <person name="Moestl D."/>
            <person name="Mueller-Auer S."/>
            <person name="Nentwich U."/>
            <person name="Obermaier B."/>
            <person name="Piravandi E."/>
            <person name="Pohl T.M."/>
            <person name="Portetelle D."/>
            <person name="Purnelle B."/>
            <person name="Rechmann S."/>
            <person name="Rieger M."/>
            <person name="Rinke M."/>
            <person name="Rose M."/>
            <person name="Scharfe M."/>
            <person name="Scherens B."/>
            <person name="Scholler P."/>
            <person name="Schwager C."/>
            <person name="Schwarz S."/>
            <person name="Underwood A.P."/>
            <person name="Urrestarazu L.A."/>
            <person name="Vandenbol M."/>
            <person name="Verhasselt P."/>
            <person name="Vierendeels F."/>
            <person name="Voet M."/>
            <person name="Volckaert G."/>
            <person name="Voss H."/>
            <person name="Wambutt R."/>
            <person name="Wedler E."/>
            <person name="Wedler H."/>
            <person name="Zimmermann F.K."/>
            <person name="Zollner A."/>
            <person name="Hani J."/>
            <person name="Hoheisel J.D."/>
        </authorList>
    </citation>
    <scope>NUCLEOTIDE SEQUENCE [LARGE SCALE GENOMIC DNA]</scope>
    <source>
        <strain>ATCC 204508 / S288c</strain>
    </source>
</reference>
<reference key="3">
    <citation type="journal article" date="2014" name="G3 (Bethesda)">
        <title>The reference genome sequence of Saccharomyces cerevisiae: Then and now.</title>
        <authorList>
            <person name="Engel S.R."/>
            <person name="Dietrich F.S."/>
            <person name="Fisk D.G."/>
            <person name="Binkley G."/>
            <person name="Balakrishnan R."/>
            <person name="Costanzo M.C."/>
            <person name="Dwight S.S."/>
            <person name="Hitz B.C."/>
            <person name="Karra K."/>
            <person name="Nash R.S."/>
            <person name="Weng S."/>
            <person name="Wong E.D."/>
            <person name="Lloyd P."/>
            <person name="Skrzypek M.S."/>
            <person name="Miyasato S.R."/>
            <person name="Simison M."/>
            <person name="Cherry J.M."/>
        </authorList>
    </citation>
    <scope>GENOME REANNOTATION</scope>
    <source>
        <strain>ATCC 204508 / S288c</strain>
    </source>
</reference>
<reference key="4">
    <citation type="journal article" date="1994" name="Nucleic Acids Res.">
        <title>The yeast BDF1 gene encodes a transcription factor involved in the expression of a broad class of genes including snRNAs.</title>
        <authorList>
            <person name="Lygerou Z."/>
            <person name="Conesa C."/>
            <person name="Lesage P."/>
            <person name="Swanson R.N."/>
            <person name="Ruet A."/>
            <person name="Carlson M."/>
            <person name="Sentenac A."/>
            <person name="Seraphin B."/>
        </authorList>
    </citation>
    <scope>NUCLEOTIDE SEQUENCE [GENOMIC DNA] OF 1-162</scope>
    <source>
        <strain>ATCC 204508 / S288c</strain>
    </source>
</reference>
<reference key="5">
    <citation type="journal article" date="1978" name="J. Bacteriol.">
        <title>Chromosomal superkiller mutants of Saccharomyces cerevisiae.</title>
        <authorList>
            <person name="Toh-e A."/>
            <person name="Guerry P."/>
            <person name="Wickner R.B."/>
        </authorList>
    </citation>
    <scope>FUNCTION</scope>
</reference>
<reference key="6">
    <citation type="journal article" date="1984" name="Mol. Cell. Biol.">
        <title>Superkiller mutations in Saccharomyces cerevisiae suppress exclusion of M2 double-stranded RNA by L-A-HN and confer cold sensitivity in the presence of M and L-A-HN.</title>
        <authorList>
            <person name="Ridley S.P."/>
            <person name="Sommer S.S."/>
            <person name="Wickner R.B."/>
        </authorList>
    </citation>
    <scope>FUNCTION</scope>
</reference>
<reference key="7">
    <citation type="journal article" date="1995" name="Mol. Cell. Biol.">
        <title>Synthetic lethality of sep1 (xrn1) ski2 and sep1 (xrn1) ski3 mutants of Saccharomyces cerevisiae is independent of killer virus and suggests a general role for these genes in translation control.</title>
        <authorList>
            <person name="Johnson A.W."/>
            <person name="Kolodner R.D."/>
        </authorList>
    </citation>
    <scope>FUNCTION</scope>
</reference>
<reference key="8">
    <citation type="journal article" date="1995" name="Mol. Cell. Biol.">
        <title>Decoying the cap- mRNA degradation system by a double-stranded RNA virus and poly(A)- mRNA surveillance by a yeast antiviral system.</title>
        <authorList>
            <person name="Masison D.C."/>
            <person name="Blanc A."/>
            <person name="Ribas J.C."/>
            <person name="Carroll K."/>
            <person name="Sonenberg N."/>
            <person name="Wickner R.B."/>
        </authorList>
    </citation>
    <scope>FUNCTION</scope>
</reference>
<reference key="9">
    <citation type="journal article" date="1998" name="EMBO J.">
        <title>The 3' to 5' degradation of yeast mRNAs is a general mechanism for mRNA turnover that requires the SKI2 DEVH box protein and 3' to 5' exonucleases of the exosome complex.</title>
        <authorList>
            <person name="Anderson J.S.J."/>
            <person name="Parker R.P."/>
        </authorList>
    </citation>
    <scope>FUNCTION</scope>
</reference>
<reference key="10">
    <citation type="journal article" date="2000" name="Mol. Cell. Biol.">
        <title>Yeast exosome mutants accumulate 3'-extended polyadenylated forms of U4 small nuclear RNA and small nucleolar RNAs.</title>
        <authorList>
            <person name="van Hoof A."/>
            <person name="Lennertz P."/>
            <person name="Parker R."/>
        </authorList>
    </citation>
    <scope>FUNCTION</scope>
</reference>
<reference key="11">
    <citation type="journal article" date="2000" name="RNA">
        <title>The yeast antiviral proteins Ski2p, Ski3p, and Ski8p exist as a complex in vivo.</title>
        <authorList>
            <person name="Brown J.T."/>
            <person name="Bai X."/>
            <person name="Johnson A.W."/>
        </authorList>
    </citation>
    <scope>FUNCTION</scope>
    <scope>INTERACTION WITH SKI3 AND SKI8</scope>
    <scope>SUBCELLULAR LOCATION</scope>
</reference>
<reference key="12">
    <citation type="journal article" date="2000" name="Proc. Natl. Acad. Sci. U.S.A.">
        <title>3' poly(A) is dispensable for translation.</title>
        <authorList>
            <person name="Searfoss A.M."/>
            <person name="Wickner R.B."/>
        </authorList>
    </citation>
    <scope>FUNCTION</scope>
</reference>
<reference key="13">
    <citation type="journal article" date="2001" name="EMBO J.">
        <title>Ski7p G protein interacts with the exosome and the Ski complex for 3'-to-5' mRNA decay in yeast.</title>
        <authorList>
            <person name="Araki Y."/>
            <person name="Takahashi S."/>
            <person name="Kobayashi T."/>
            <person name="Kajiho H."/>
            <person name="Hoshino S."/>
            <person name="Katada T."/>
        </authorList>
    </citation>
    <scope>FUNCTION OF THE SKI COMPLEX</scope>
</reference>
<reference key="14">
    <citation type="journal article" date="2001" name="RNA">
        <title>A cis-acting element known to block 3' mRNA degradation enhances expression of polyA-minus mRNA in wild-type yeast cells and phenocopies a ski mutant.</title>
        <authorList>
            <person name="Brown J.T."/>
            <person name="Johnson A.W."/>
        </authorList>
    </citation>
    <scope>FUNCTION OF THE SKI COMPLEX</scope>
</reference>
<reference key="15">
    <citation type="journal article" date="2003" name="Mol. Cell">
        <title>An NMD pathway in yeast involving accelerated deadenylation and exosome-mediated 3'--&gt;5' degradation.</title>
        <authorList>
            <person name="Mitchell P."/>
            <person name="Tollervey D."/>
        </authorList>
    </citation>
    <scope>FUNCTION</scope>
</reference>
<reference key="16">
    <citation type="journal article" date="2003" name="Nature">
        <title>Global analysis of protein localization in budding yeast.</title>
        <authorList>
            <person name="Huh W.-K."/>
            <person name="Falvo J.V."/>
            <person name="Gerke L.C."/>
            <person name="Carroll A.S."/>
            <person name="Howson R.W."/>
            <person name="Weissman J.S."/>
            <person name="O'Shea E.K."/>
        </authorList>
    </citation>
    <scope>SUBCELLULAR LOCATION [LARGE SCALE ANALYSIS]</scope>
</reference>
<reference key="17">
    <citation type="journal article" date="2003" name="Nature">
        <title>Global analysis of protein expression in yeast.</title>
        <authorList>
            <person name="Ghaemmaghami S."/>
            <person name="Huh W.-K."/>
            <person name="Bower K."/>
            <person name="Howson R.W."/>
            <person name="Belle A."/>
            <person name="Dephoure N."/>
            <person name="O'Shea E.K."/>
            <person name="Weissman J.S."/>
        </authorList>
    </citation>
    <scope>LEVEL OF PROTEIN EXPRESSION [LARGE SCALE ANALYSIS]</scope>
</reference>
<reference key="18">
    <citation type="journal article" date="2003" name="Proc. Natl. Acad. Sci. U.S.A.">
        <title>Systematic, genome-wide identification of host genes affecting replication of a positive-strand RNA virus.</title>
        <authorList>
            <person name="Kushner D.B."/>
            <person name="Lindenbach B.D."/>
            <person name="Grdzelishvili V.Z."/>
            <person name="Noueiry A.O."/>
            <person name="Paul S.M."/>
            <person name="Ahlquist P."/>
        </authorList>
    </citation>
    <scope>FUNCTION</scope>
</reference>
<reference key="19">
    <citation type="journal article" date="2007" name="J. Proteome Res.">
        <title>Large-scale phosphorylation analysis of alpha-factor-arrested Saccharomyces cerevisiae.</title>
        <authorList>
            <person name="Li X."/>
            <person name="Gerber S.A."/>
            <person name="Rudner A.D."/>
            <person name="Beausoleil S.A."/>
            <person name="Haas W."/>
            <person name="Villen J."/>
            <person name="Elias J.E."/>
            <person name="Gygi S.P."/>
        </authorList>
    </citation>
    <scope>PHOSPHORYLATION [LARGE SCALE ANALYSIS] AT SER-209</scope>
    <scope>IDENTIFICATION BY MASS SPECTROMETRY [LARGE SCALE ANALYSIS]</scope>
    <source>
        <strain>ADR376</strain>
    </source>
</reference>
<reference key="20">
    <citation type="journal article" date="2008" name="Mol. Cell. Proteomics">
        <title>A multidimensional chromatography technology for in-depth phosphoproteome analysis.</title>
        <authorList>
            <person name="Albuquerque C.P."/>
            <person name="Smolka M.B."/>
            <person name="Payne S.H."/>
            <person name="Bafna V."/>
            <person name="Eng J."/>
            <person name="Zhou H."/>
        </authorList>
    </citation>
    <scope>PHOSPHORYLATION [LARGE SCALE ANALYSIS] AT SER-209</scope>
    <scope>IDENTIFICATION BY MASS SPECTROMETRY [LARGE SCALE ANALYSIS]</scope>
</reference>
<reference key="21">
    <citation type="journal article" date="2009" name="Science">
        <title>Global analysis of Cdk1 substrate phosphorylation sites provides insights into evolution.</title>
        <authorList>
            <person name="Holt L.J."/>
            <person name="Tuch B.B."/>
            <person name="Villen J."/>
            <person name="Johnson A.D."/>
            <person name="Gygi S.P."/>
            <person name="Morgan D.O."/>
        </authorList>
    </citation>
    <scope>PHOSPHORYLATION [LARGE SCALE ANALYSIS] AT SER-209</scope>
    <scope>IDENTIFICATION BY MASS SPECTROMETRY [LARGE SCALE ANALYSIS]</scope>
</reference>
<reference key="22">
    <citation type="journal article" date="2004" name="Science">
        <title>Structure-based assembly of protein complexes in yeast.</title>
        <authorList>
            <person name="Aloy P."/>
            <person name="Boettcher B."/>
            <person name="Ceulemans H."/>
            <person name="Leutwein C."/>
            <person name="Mellwig C."/>
            <person name="Fischer S."/>
            <person name="Gavin A.-C."/>
            <person name="Bork P."/>
            <person name="Superti-Furga G."/>
            <person name="Serrano L."/>
            <person name="Russell R.B."/>
        </authorList>
    </citation>
    <scope>MODELING OF THE SKI COMPLEX 3D-STRUCTURE</scope>
</reference>
<comment type="function">
    <text evidence="5 6 7 8 9 10 13 14 15 16 17 18 19">RNA helicase component of the SKI complex involved in 3'-mRNA degradation pathway. Represses dsRNA virus propagation by specifically blocking translation of viral mRNAs, perhaps recognizing the absence of CAP or poly(A). Essential for cell growth only in the presence of M1 replicon.</text>
</comment>
<comment type="catalytic activity">
    <reaction>
        <text>ATP + H2O = ADP + phosphate + H(+)</text>
        <dbReference type="Rhea" id="RHEA:13065"/>
        <dbReference type="ChEBI" id="CHEBI:15377"/>
        <dbReference type="ChEBI" id="CHEBI:15378"/>
        <dbReference type="ChEBI" id="CHEBI:30616"/>
        <dbReference type="ChEBI" id="CHEBI:43474"/>
        <dbReference type="ChEBI" id="CHEBI:456216"/>
        <dbReference type="EC" id="3.6.4.13"/>
    </reaction>
</comment>
<comment type="subunit">
    <text evidence="6">Component of the SKI complex composed of at least SKI2, SKI3 and SKI8. The SKI complex interacts with SKI7, which makes the link between the SKI complex and the exosome in order to perform mRNA degradation.</text>
</comment>
<comment type="interaction">
    <interactant intactId="EBI-1851">
        <id>P35207</id>
    </interactant>
    <interactant intactId="EBI-1861">
        <id>P17883</id>
        <label>SKI3</label>
    </interactant>
    <organismsDiffer>false</organismsDiffer>
    <experiments>12</experiments>
</comment>
<comment type="interaction">
    <interactant intactId="EBI-1851">
        <id>P35207</id>
    </interactant>
    <interactant intactId="EBI-17260">
        <id>Q02793</id>
        <label>SKI8</label>
    </interactant>
    <organismsDiffer>false</organismsDiffer>
    <experiments>12</experiments>
</comment>
<comment type="subcellular location">
    <subcellularLocation>
        <location evidence="6 11">Cytoplasm</location>
    </subcellularLocation>
</comment>
<comment type="miscellaneous">
    <text evidence="12">Present with 5770 molecules/cell in log phase SD medium.</text>
</comment>
<comment type="similarity">
    <text evidence="20">Belongs to the helicase family. SKI2 subfamily.</text>
</comment>
<accession>P35207</accession>
<accession>D6VZ33</accession>
<accession>Q06047</accession>
<protein>
    <recommendedName>
        <fullName>Antiviral helicase SKI2</fullName>
        <ecNumber>3.6.4.13</ecNumber>
    </recommendedName>
    <alternativeName>
        <fullName>Superkiller protein 2</fullName>
    </alternativeName>
</protein>
<gene>
    <name type="primary">SKI2</name>
    <name type="ordered locus">YLR398C</name>
    <name type="ORF">L8084.17</name>
</gene>
<keyword id="KW-0002">3D-structure</keyword>
<keyword id="KW-0051">Antiviral defense</keyword>
<keyword id="KW-0067">ATP-binding</keyword>
<keyword id="KW-0963">Cytoplasm</keyword>
<keyword id="KW-0238">DNA-binding</keyword>
<keyword id="KW-0347">Helicase</keyword>
<keyword id="KW-0378">Hydrolase</keyword>
<keyword id="KW-0547">Nucleotide-binding</keyword>
<keyword id="KW-0597">Phosphoprotein</keyword>
<keyword id="KW-1185">Reference proteome</keyword>
<keyword id="KW-0694">RNA-binding</keyword>
<keyword id="KW-0810">Translation regulation</keyword>
<evidence type="ECO:0000250" key="1"/>
<evidence type="ECO:0000255" key="2">
    <source>
        <dbReference type="PROSITE-ProRule" id="PRU00541"/>
    </source>
</evidence>
<evidence type="ECO:0000255" key="3">
    <source>
        <dbReference type="PROSITE-ProRule" id="PRU00542"/>
    </source>
</evidence>
<evidence type="ECO:0000256" key="4">
    <source>
        <dbReference type="SAM" id="MobiDB-lite"/>
    </source>
</evidence>
<evidence type="ECO:0000269" key="5">
    <source>
    </source>
</evidence>
<evidence type="ECO:0000269" key="6">
    <source>
    </source>
</evidence>
<evidence type="ECO:0000269" key="7">
    <source>
    </source>
</evidence>
<evidence type="ECO:0000269" key="8">
    <source>
    </source>
</evidence>
<evidence type="ECO:0000269" key="9">
    <source>
    </source>
</evidence>
<evidence type="ECO:0000269" key="10">
    <source>
    </source>
</evidence>
<evidence type="ECO:0000269" key="11">
    <source>
    </source>
</evidence>
<evidence type="ECO:0000269" key="12">
    <source>
    </source>
</evidence>
<evidence type="ECO:0000269" key="13">
    <source>
    </source>
</evidence>
<evidence type="ECO:0000269" key="14">
    <source>
    </source>
</evidence>
<evidence type="ECO:0000269" key="15">
    <source>
    </source>
</evidence>
<evidence type="ECO:0000269" key="16">
    <source>
    </source>
</evidence>
<evidence type="ECO:0000269" key="17">
    <source>
    </source>
</evidence>
<evidence type="ECO:0000269" key="18">
    <source>
    </source>
</evidence>
<evidence type="ECO:0000269" key="19">
    <source>
    </source>
</evidence>
<evidence type="ECO:0000305" key="20"/>
<evidence type="ECO:0007744" key="21">
    <source>
    </source>
</evidence>
<evidence type="ECO:0007744" key="22">
    <source>
    </source>
</evidence>
<evidence type="ECO:0007744" key="23">
    <source>
    </source>
</evidence>
<evidence type="ECO:0007829" key="24">
    <source>
        <dbReference type="PDB" id="4A4K"/>
    </source>
</evidence>
<evidence type="ECO:0007829" key="25">
    <source>
        <dbReference type="PDB" id="4A4Z"/>
    </source>
</evidence>
<evidence type="ECO:0007829" key="26">
    <source>
        <dbReference type="PDB" id="8QCA"/>
    </source>
</evidence>
<evidence type="ECO:0007829" key="27">
    <source>
        <dbReference type="PDB" id="8QCB"/>
    </source>
</evidence>
<proteinExistence type="evidence at protein level"/>
<dbReference type="EC" id="3.6.4.13"/>
<dbReference type="EMBL" id="L13469">
    <property type="protein sequence ID" value="AAA35049.1"/>
    <property type="molecule type" value="mRNA"/>
</dbReference>
<dbReference type="EMBL" id="U19729">
    <property type="protein sequence ID" value="AAB82356.1"/>
    <property type="molecule type" value="Genomic_DNA"/>
</dbReference>
<dbReference type="EMBL" id="Z18944">
    <property type="protein sequence ID" value="CAA79378.1"/>
    <property type="molecule type" value="Genomic_DNA"/>
</dbReference>
<dbReference type="EMBL" id="BK006945">
    <property type="protein sequence ID" value="DAA09699.1"/>
    <property type="molecule type" value="Genomic_DNA"/>
</dbReference>
<dbReference type="PIR" id="S55954">
    <property type="entry name" value="S55954"/>
</dbReference>
<dbReference type="RefSeq" id="NP_013502.3">
    <property type="nucleotide sequence ID" value="NM_001182286.3"/>
</dbReference>
<dbReference type="PDB" id="4A4K">
    <property type="method" value="X-ray"/>
    <property type="resolution" value="3.25 A"/>
    <property type="chains" value="A/C/E/G/I=835-1085"/>
</dbReference>
<dbReference type="PDB" id="4A4Z">
    <property type="method" value="X-ray"/>
    <property type="resolution" value="2.40 A"/>
    <property type="chains" value="A=296-1287"/>
</dbReference>
<dbReference type="PDB" id="4BUJ">
    <property type="method" value="X-ray"/>
    <property type="resolution" value="3.70 A"/>
    <property type="chains" value="A/E=1-208, A/E=301-834, A/E=1086-1287"/>
</dbReference>
<dbReference type="PDB" id="5MC6">
    <property type="method" value="EM"/>
    <property type="resolution" value="3.80 A"/>
    <property type="chains" value="h=1-1287"/>
</dbReference>
<dbReference type="PDB" id="8Q9T">
    <property type="method" value="EM"/>
    <property type="resolution" value="2.84 A"/>
    <property type="chains" value="A=1-1287"/>
</dbReference>
<dbReference type="PDB" id="8QCA">
    <property type="method" value="EM"/>
    <property type="resolution" value="2.84 A"/>
    <property type="chains" value="A=1-1287"/>
</dbReference>
<dbReference type="PDB" id="8QCB">
    <property type="method" value="EM"/>
    <property type="resolution" value="2.80 A"/>
    <property type="chains" value="A=1-1287"/>
</dbReference>
<dbReference type="PDB" id="8QCF">
    <property type="method" value="EM"/>
    <property type="resolution" value="2.55 A"/>
    <property type="chains" value="M=1-851"/>
</dbReference>
<dbReference type="PDBsum" id="4A4K"/>
<dbReference type="PDBsum" id="4A4Z"/>
<dbReference type="PDBsum" id="4BUJ"/>
<dbReference type="PDBsum" id="5MC6"/>
<dbReference type="PDBsum" id="8Q9T"/>
<dbReference type="PDBsum" id="8QCA"/>
<dbReference type="PDBsum" id="8QCB"/>
<dbReference type="PDBsum" id="8QCF"/>
<dbReference type="EMDB" id="EMD-18288"/>
<dbReference type="EMDB" id="EMD-18326"/>
<dbReference type="EMDB" id="EMD-18328"/>
<dbReference type="EMDB" id="EMD-18329"/>
<dbReference type="EMDB" id="EMD-3461"/>
<dbReference type="SMR" id="P35207"/>
<dbReference type="BioGRID" id="31657">
    <property type="interactions" value="288"/>
</dbReference>
<dbReference type="ComplexPortal" id="CPX-1040">
    <property type="entry name" value="SKI complex"/>
</dbReference>
<dbReference type="DIP" id="DIP-5887N"/>
<dbReference type="FunCoup" id="P35207">
    <property type="interactions" value="1119"/>
</dbReference>
<dbReference type="IntAct" id="P35207">
    <property type="interactions" value="37"/>
</dbReference>
<dbReference type="MINT" id="P35207"/>
<dbReference type="STRING" id="4932.YLR398C"/>
<dbReference type="iPTMnet" id="P35207"/>
<dbReference type="PaxDb" id="4932-YLR398C"/>
<dbReference type="PeptideAtlas" id="P35207"/>
<dbReference type="EnsemblFungi" id="YLR398C_mRNA">
    <property type="protein sequence ID" value="YLR398C"/>
    <property type="gene ID" value="YLR398C"/>
</dbReference>
<dbReference type="GeneID" id="851114"/>
<dbReference type="KEGG" id="sce:YLR398C"/>
<dbReference type="AGR" id="SGD:S000004390"/>
<dbReference type="SGD" id="S000004390">
    <property type="gene designation" value="SKI2"/>
</dbReference>
<dbReference type="VEuPathDB" id="FungiDB:YLR398C"/>
<dbReference type="eggNOG" id="KOG0947">
    <property type="taxonomic scope" value="Eukaryota"/>
</dbReference>
<dbReference type="GeneTree" id="ENSGT00940000158255"/>
<dbReference type="HOGENOM" id="CLU_002902_1_4_1"/>
<dbReference type="InParanoid" id="P35207"/>
<dbReference type="OMA" id="DHVNIIM"/>
<dbReference type="OrthoDB" id="64767at2759"/>
<dbReference type="BioCyc" id="YEAST:G3O-32462-MONOMER"/>
<dbReference type="Reactome" id="R-SCE-429958">
    <property type="pathway name" value="mRNA decay by 3' to 5' exoribonuclease"/>
</dbReference>
<dbReference type="BioGRID-ORCS" id="851114">
    <property type="hits" value="1 hit in 10 CRISPR screens"/>
</dbReference>
<dbReference type="CD-CODE" id="BDAE0F88">
    <property type="entry name" value="Nucleolus"/>
</dbReference>
<dbReference type="EvolutionaryTrace" id="P35207"/>
<dbReference type="PRO" id="PR:P35207"/>
<dbReference type="Proteomes" id="UP000002311">
    <property type="component" value="Chromosome XII"/>
</dbReference>
<dbReference type="RNAct" id="P35207">
    <property type="molecule type" value="protein"/>
</dbReference>
<dbReference type="GO" id="GO:0005737">
    <property type="term" value="C:cytoplasm"/>
    <property type="evidence" value="ECO:0000314"/>
    <property type="project" value="SGD"/>
</dbReference>
<dbReference type="GO" id="GO:0055087">
    <property type="term" value="C:Ski complex"/>
    <property type="evidence" value="ECO:0000314"/>
    <property type="project" value="SGD"/>
</dbReference>
<dbReference type="GO" id="GO:0005524">
    <property type="term" value="F:ATP binding"/>
    <property type="evidence" value="ECO:0007669"/>
    <property type="project" value="UniProtKB-KW"/>
</dbReference>
<dbReference type="GO" id="GO:0016887">
    <property type="term" value="F:ATP hydrolysis activity"/>
    <property type="evidence" value="ECO:0007669"/>
    <property type="project" value="RHEA"/>
</dbReference>
<dbReference type="GO" id="GO:0003677">
    <property type="term" value="F:DNA binding"/>
    <property type="evidence" value="ECO:0007669"/>
    <property type="project" value="UniProtKB-KW"/>
</dbReference>
<dbReference type="GO" id="GO:0003729">
    <property type="term" value="F:mRNA binding"/>
    <property type="evidence" value="ECO:0007005"/>
    <property type="project" value="SGD"/>
</dbReference>
<dbReference type="GO" id="GO:0003724">
    <property type="term" value="F:RNA helicase activity"/>
    <property type="evidence" value="ECO:0000318"/>
    <property type="project" value="GO_Central"/>
</dbReference>
<dbReference type="GO" id="GO:0051607">
    <property type="term" value="P:defense response to virus"/>
    <property type="evidence" value="ECO:0007669"/>
    <property type="project" value="UniProtKB-KW"/>
</dbReference>
<dbReference type="GO" id="GO:0006402">
    <property type="term" value="P:mRNA catabolic process"/>
    <property type="evidence" value="ECO:0000314"/>
    <property type="project" value="ComplexPortal"/>
</dbReference>
<dbReference type="GO" id="GO:0000956">
    <property type="term" value="P:nuclear-transcribed mRNA catabolic process"/>
    <property type="evidence" value="ECO:0000314"/>
    <property type="project" value="ComplexPortal"/>
</dbReference>
<dbReference type="GO" id="GO:0070478">
    <property type="term" value="P:nuclear-transcribed mRNA catabolic process, 3'-5' exonucleolytic nonsense-mediated decay"/>
    <property type="evidence" value="ECO:0000315"/>
    <property type="project" value="SGD"/>
</dbReference>
<dbReference type="GO" id="GO:0070481">
    <property type="term" value="P:nuclear-transcribed mRNA catabolic process, non-stop decay"/>
    <property type="evidence" value="ECO:0000315"/>
    <property type="project" value="SGD"/>
</dbReference>
<dbReference type="GO" id="GO:0006417">
    <property type="term" value="P:regulation of translation"/>
    <property type="evidence" value="ECO:0007669"/>
    <property type="project" value="UniProtKB-KW"/>
</dbReference>
<dbReference type="CDD" id="cd18795">
    <property type="entry name" value="SF2_C_Ski2"/>
    <property type="match status" value="1"/>
</dbReference>
<dbReference type="FunFam" id="3.40.50.300:FF:000354">
    <property type="entry name" value="ATP-dependent RNA helicase SKI2"/>
    <property type="match status" value="1"/>
</dbReference>
<dbReference type="FunFam" id="3.40.50.300:FF:000987">
    <property type="entry name" value="DEAD/DEAH box RNA helicase"/>
    <property type="match status" value="1"/>
</dbReference>
<dbReference type="FunFam" id="1.10.3380.30:FF:000001">
    <property type="entry name" value="Ski2 ATP-dependent RNA helicase"/>
    <property type="match status" value="1"/>
</dbReference>
<dbReference type="FunFam" id="1.10.3380.30:FF:000004">
    <property type="entry name" value="Superkiller viralicidic activity 2-like 2"/>
    <property type="match status" value="1"/>
</dbReference>
<dbReference type="Gene3D" id="1.10.3380.30">
    <property type="match status" value="2"/>
</dbReference>
<dbReference type="Gene3D" id="2.30.30.1160">
    <property type="match status" value="1"/>
</dbReference>
<dbReference type="Gene3D" id="3.40.50.300">
    <property type="entry name" value="P-loop containing nucleotide triphosphate hydrolases"/>
    <property type="match status" value="2"/>
</dbReference>
<dbReference type="InterPro" id="IPR011545">
    <property type="entry name" value="DEAD/DEAH_box_helicase_dom"/>
</dbReference>
<dbReference type="InterPro" id="IPR014001">
    <property type="entry name" value="Helicase_ATP-bd"/>
</dbReference>
<dbReference type="InterPro" id="IPR001650">
    <property type="entry name" value="Helicase_C-like"/>
</dbReference>
<dbReference type="InterPro" id="IPR048392">
    <property type="entry name" value="MTR4-like_stalk"/>
</dbReference>
<dbReference type="InterPro" id="IPR027417">
    <property type="entry name" value="P-loop_NTPase"/>
</dbReference>
<dbReference type="InterPro" id="IPR050699">
    <property type="entry name" value="RNA-DNA_Helicase"/>
</dbReference>
<dbReference type="InterPro" id="IPR016438">
    <property type="entry name" value="SKI2-like"/>
</dbReference>
<dbReference type="InterPro" id="IPR012961">
    <property type="entry name" value="Ski2/MTR4_C"/>
</dbReference>
<dbReference type="InterPro" id="IPR048727">
    <property type="entry name" value="Ski2_beta-barrel"/>
</dbReference>
<dbReference type="InterPro" id="IPR040801">
    <property type="entry name" value="Ski2_N"/>
</dbReference>
<dbReference type="PANTHER" id="PTHR12131">
    <property type="entry name" value="ATP-DEPENDENT RNA AND DNA HELICASE"/>
    <property type="match status" value="1"/>
</dbReference>
<dbReference type="PANTHER" id="PTHR12131:SF1">
    <property type="entry name" value="ATP-DEPENDENT RNA HELICASE SUPV3L1, MITOCHONDRIAL-RELATED"/>
    <property type="match status" value="1"/>
</dbReference>
<dbReference type="Pfam" id="PF00270">
    <property type="entry name" value="DEAD"/>
    <property type="match status" value="1"/>
</dbReference>
<dbReference type="Pfam" id="PF08148">
    <property type="entry name" value="DSHCT"/>
    <property type="match status" value="1"/>
</dbReference>
<dbReference type="Pfam" id="PF00271">
    <property type="entry name" value="Helicase_C"/>
    <property type="match status" value="1"/>
</dbReference>
<dbReference type="Pfam" id="PF21408">
    <property type="entry name" value="MTR4-like_stalk"/>
    <property type="match status" value="1"/>
</dbReference>
<dbReference type="Pfam" id="PF21409">
    <property type="entry name" value="Ski2_beta-barrel"/>
    <property type="match status" value="1"/>
</dbReference>
<dbReference type="Pfam" id="PF17911">
    <property type="entry name" value="Ski2_N"/>
    <property type="match status" value="1"/>
</dbReference>
<dbReference type="PIRSF" id="PIRSF005198">
    <property type="entry name" value="Antiviral_helicase_SKI2"/>
    <property type="match status" value="1"/>
</dbReference>
<dbReference type="SMART" id="SM00487">
    <property type="entry name" value="DEXDc"/>
    <property type="match status" value="1"/>
</dbReference>
<dbReference type="SMART" id="SM01142">
    <property type="entry name" value="DSHCT"/>
    <property type="match status" value="1"/>
</dbReference>
<dbReference type="SMART" id="SM00490">
    <property type="entry name" value="HELICc"/>
    <property type="match status" value="1"/>
</dbReference>
<dbReference type="SUPFAM" id="SSF52540">
    <property type="entry name" value="P-loop containing nucleoside triphosphate hydrolases"/>
    <property type="match status" value="1"/>
</dbReference>
<dbReference type="PROSITE" id="PS51192">
    <property type="entry name" value="HELICASE_ATP_BIND_1"/>
    <property type="match status" value="1"/>
</dbReference>
<dbReference type="PROSITE" id="PS51194">
    <property type="entry name" value="HELICASE_CTER"/>
    <property type="match status" value="1"/>
</dbReference>
<sequence length="1287" mass="146059">MSEGFSSSSIQELYQSLKEITNNADVELFEDRITKLDFESTDEPKHANDIIKDRFLRPSNALPWSLLDMVQDVPHTSSPEDCSGKLDYKELLKVPDPINRTSYQFKRTGLEGKISGYKEEVDLKEVANANASNSLSITRSINHNQNSVRGSTAQLPFTPGGIPMKSVKTDSEQNGSSTMANATKLLHKDGQGLFDIPEGMNRGIKPMDSPAENEDQNGQFKELKQLNEIDNELDIRIEANEAKLKEEEKSAKSISEEIMEEATEETTADNADDAEIDELLPIGIDFGRTKPVSKSVPVKKEWAHVVDLNHKIENFDELIPNPARSWPFELDTFQKEAVYHLEQGDSVFVAAHTSAGKTVVAEYAIAMAHRNMTKTIYTSPIKALSNQKFRDFKETFDDVNIGLITGDVQINPDANCLIMTTEILRSMLYRGADLIRDVEFVIFDEVHYVNDQDRGVVWEEVIIMLPQHVKFILLSATVPNTYEFANWIGRTKQKNIYVISTPKRPVPLEINIWAKKELIPVINQNSEFLEANFRKHKEILNGESAKGAPSKTDNGRGGSTARGGRGGSNTRDGRGGRGNSTRGGANRGGSRGAGAIGSNKRKFFTQDGPSKKTWPEIVNYLRKRELLPMVVFVFSKKRCEEYADWLEGINFCNNKEKSQIHMFIEKSITRLKKEDRDLPQILKTRSLLERGIAVHHGGLLPIVKELIEILFSKGFIKVLFATETFAMGLNLPTRTVIFSSIRKHDGNGLRELTPGEFTQMAGRAGRRGLDSTGTVIVMAYNSPLSIATFKEVTMGVPTRLQSQFRLTYNMILNLLRIEALRVEEMIKYSFSENAKETLQPEHEKQIKVLQEELQTIEYKSCEICDNDIEKFLELMLAYKEATVNLMQEMVKSPSILHILKEGRLVAFRDPNDCLKLGFVFKVSLKDAVCVIMTFTKPYKLPNGEPNHLIYFPKADGYRRRNFPKFQKTDFYMEEVPVTAIEVITKRKFAAPLGKVIKKDVAALNEFNAETNNILDGKTLKEAINIEKQGLKIHQILLDRTNIRDEIFKLKSIKCPNLSQHIVPKFKAHVIKKKIEELYHLMSDQNLSLLPDYEKRLAVLKDTEFIDQNHNVLLKGRVACEINSGYELVLTELILDNFLGSFEPEEIVALLSVFVYEGKTREEEPPIVTPRLAKGKQRIEEIYKKMLCVFNTHQIPLTQDEAEFLDRKRFAMMNVVYEWARGLSFKEIMEMSPEAEGTVVRVITWLDEICREVKTASIIIGNSTLHMKMSRAQELIKRDIVFAASLYL</sequence>